<proteinExistence type="inferred from homology"/>
<name>PNCB_SALHS</name>
<gene>
    <name evidence="1" type="primary">pncB</name>
    <name type="ordered locus">SeHA_C1106</name>
</gene>
<reference key="1">
    <citation type="journal article" date="2011" name="J. Bacteriol.">
        <title>Comparative genomics of 28 Salmonella enterica isolates: evidence for CRISPR-mediated adaptive sublineage evolution.</title>
        <authorList>
            <person name="Fricke W.F."/>
            <person name="Mammel M.K."/>
            <person name="McDermott P.F."/>
            <person name="Tartera C."/>
            <person name="White D.G."/>
            <person name="Leclerc J.E."/>
            <person name="Ravel J."/>
            <person name="Cebula T.A."/>
        </authorList>
    </citation>
    <scope>NUCLEOTIDE SEQUENCE [LARGE SCALE GENOMIC DNA]</scope>
    <source>
        <strain>SL476</strain>
    </source>
</reference>
<keyword id="KW-0436">Ligase</keyword>
<keyword id="KW-0597">Phosphoprotein</keyword>
<keyword id="KW-0662">Pyridine nucleotide biosynthesis</keyword>
<feature type="chain" id="PRO_1000129486" description="Nicotinate phosphoribosyltransferase">
    <location>
        <begin position="1"/>
        <end position="400"/>
    </location>
</feature>
<feature type="modified residue" description="Phosphohistidine; by autocatalysis" evidence="1">
    <location>
        <position position="220"/>
    </location>
</feature>
<organism>
    <name type="scientific">Salmonella heidelberg (strain SL476)</name>
    <dbReference type="NCBI Taxonomy" id="454169"/>
    <lineage>
        <taxon>Bacteria</taxon>
        <taxon>Pseudomonadati</taxon>
        <taxon>Pseudomonadota</taxon>
        <taxon>Gammaproteobacteria</taxon>
        <taxon>Enterobacterales</taxon>
        <taxon>Enterobacteriaceae</taxon>
        <taxon>Salmonella</taxon>
    </lineage>
</organism>
<protein>
    <recommendedName>
        <fullName evidence="1">Nicotinate phosphoribosyltransferase</fullName>
        <shortName evidence="1">NAPRTase</shortName>
        <ecNumber evidence="1">6.3.4.21</ecNumber>
    </recommendedName>
</protein>
<accession>B4TDS5</accession>
<evidence type="ECO:0000255" key="1">
    <source>
        <dbReference type="HAMAP-Rule" id="MF_00570"/>
    </source>
</evidence>
<dbReference type="EC" id="6.3.4.21" evidence="1"/>
<dbReference type="EMBL" id="CP001120">
    <property type="protein sequence ID" value="ACF70112.1"/>
    <property type="molecule type" value="Genomic_DNA"/>
</dbReference>
<dbReference type="RefSeq" id="WP_000191413.1">
    <property type="nucleotide sequence ID" value="NC_011083.1"/>
</dbReference>
<dbReference type="SMR" id="B4TDS5"/>
<dbReference type="KEGG" id="seh:SeHA_C1106"/>
<dbReference type="HOGENOM" id="CLU_030991_1_0_6"/>
<dbReference type="UniPathway" id="UPA00253">
    <property type="reaction ID" value="UER00457"/>
</dbReference>
<dbReference type="Proteomes" id="UP000001866">
    <property type="component" value="Chromosome"/>
</dbReference>
<dbReference type="GO" id="GO:0005829">
    <property type="term" value="C:cytosol"/>
    <property type="evidence" value="ECO:0007669"/>
    <property type="project" value="TreeGrafter"/>
</dbReference>
<dbReference type="GO" id="GO:0004516">
    <property type="term" value="F:nicotinate phosphoribosyltransferase activity"/>
    <property type="evidence" value="ECO:0007669"/>
    <property type="project" value="UniProtKB-UniRule"/>
</dbReference>
<dbReference type="GO" id="GO:0034355">
    <property type="term" value="P:NAD biosynthetic process via the salvage pathway"/>
    <property type="evidence" value="ECO:0007669"/>
    <property type="project" value="TreeGrafter"/>
</dbReference>
<dbReference type="CDD" id="cd01401">
    <property type="entry name" value="PncB_like"/>
    <property type="match status" value="1"/>
</dbReference>
<dbReference type="FunFam" id="3.20.140.10:FF:000001">
    <property type="entry name" value="Nicotinate phosphoribosyltransferase"/>
    <property type="match status" value="1"/>
</dbReference>
<dbReference type="Gene3D" id="3.20.140.10">
    <property type="entry name" value="nicotinate phosphoribosyltransferase"/>
    <property type="match status" value="1"/>
</dbReference>
<dbReference type="HAMAP" id="MF_00570">
    <property type="entry name" value="NAPRTase"/>
    <property type="match status" value="1"/>
</dbReference>
<dbReference type="InterPro" id="IPR041525">
    <property type="entry name" value="N/Namide_PRibTrfase"/>
</dbReference>
<dbReference type="InterPro" id="IPR040727">
    <property type="entry name" value="NAPRTase_N"/>
</dbReference>
<dbReference type="InterPro" id="IPR006406">
    <property type="entry name" value="Nic_PRibTrfase"/>
</dbReference>
<dbReference type="InterPro" id="IPR007229">
    <property type="entry name" value="Nic_PRibTrfase-Fam"/>
</dbReference>
<dbReference type="InterPro" id="IPR036068">
    <property type="entry name" value="Nicotinate_pribotase-like_C"/>
</dbReference>
<dbReference type="NCBIfam" id="TIGR01514">
    <property type="entry name" value="NAPRTase"/>
    <property type="match status" value="1"/>
</dbReference>
<dbReference type="NCBIfam" id="NF003704">
    <property type="entry name" value="PRK05321.1"/>
    <property type="match status" value="1"/>
</dbReference>
<dbReference type="PANTHER" id="PTHR11098">
    <property type="entry name" value="NICOTINATE PHOSPHORIBOSYLTRANSFERASE"/>
    <property type="match status" value="1"/>
</dbReference>
<dbReference type="PANTHER" id="PTHR11098:SF1">
    <property type="entry name" value="NICOTINATE PHOSPHORIBOSYLTRANSFERASE"/>
    <property type="match status" value="1"/>
</dbReference>
<dbReference type="Pfam" id="PF04095">
    <property type="entry name" value="NAPRTase"/>
    <property type="match status" value="1"/>
</dbReference>
<dbReference type="Pfam" id="PF17767">
    <property type="entry name" value="NAPRTase_N"/>
    <property type="match status" value="1"/>
</dbReference>
<dbReference type="PIRSF" id="PIRSF000484">
    <property type="entry name" value="NAPRT"/>
    <property type="match status" value="1"/>
</dbReference>
<dbReference type="SUPFAM" id="SSF51690">
    <property type="entry name" value="Nicotinate/Quinolinate PRTase C-terminal domain-like"/>
    <property type="match status" value="1"/>
</dbReference>
<dbReference type="SUPFAM" id="SSF54675">
    <property type="entry name" value="Nicotinate/Quinolinate PRTase N-terminal domain-like"/>
    <property type="match status" value="1"/>
</dbReference>
<sequence>MTQFASPVLHSLLDTDAYKLHMQQAVFHHYYDVQVAAEFRCRGDDLLGIYADAIREQVDAMQHLRLQEDEFQWLSGLPFFKPDYLNWLREFRYNPDQVCVTNDNGKLHIRLTGPWREVIMWEVPLLAVISELVHHYRSPNAGVDQALDALESKLVDFTALTADLDMSRFHLMDFGTRRRFSREVQQAIVKRLQQESWFVGTSNYDLARRLALTPMGTQAHEWFQAHQQISPDLATSQRAALAAWLNEYPDQLGIALTDCITMDAFLRDFGIEFASRYQGLRHDSGDPVAWGEKAIAHYEKLGIDPLTKTLVFSDNLDLQKAVELYRHFASRVQLSFGIGTRLTCDIPQVKPLNIVIKLVECNGKPVAKLSDSPGKTICHDKAFVRALRKAFDLPQVRKAS</sequence>
<comment type="function">
    <text evidence="1">Catalyzes the synthesis of beta-nicotinate D-ribonucleotide from nicotinate and 5-phospho-D-ribose 1-phosphate at the expense of ATP.</text>
</comment>
<comment type="catalytic activity">
    <reaction evidence="1">
        <text>nicotinate + 5-phospho-alpha-D-ribose 1-diphosphate + ATP + H2O = nicotinate beta-D-ribonucleotide + ADP + phosphate + diphosphate</text>
        <dbReference type="Rhea" id="RHEA:36163"/>
        <dbReference type="ChEBI" id="CHEBI:15377"/>
        <dbReference type="ChEBI" id="CHEBI:30616"/>
        <dbReference type="ChEBI" id="CHEBI:32544"/>
        <dbReference type="ChEBI" id="CHEBI:33019"/>
        <dbReference type="ChEBI" id="CHEBI:43474"/>
        <dbReference type="ChEBI" id="CHEBI:57502"/>
        <dbReference type="ChEBI" id="CHEBI:58017"/>
        <dbReference type="ChEBI" id="CHEBI:456216"/>
        <dbReference type="EC" id="6.3.4.21"/>
    </reaction>
</comment>
<comment type="pathway">
    <text evidence="1">Cofactor biosynthesis; NAD(+) biosynthesis; nicotinate D-ribonucleotide from nicotinate: step 1/1.</text>
</comment>
<comment type="PTM">
    <text evidence="1">Transiently phosphorylated on a His residue during the reaction cycle. Phosphorylation strongly increases the affinity for substrates and increases the rate of nicotinate D-ribonucleotide production. Dephosphorylation regenerates the low-affinity form of the enzyme, leading to product release.</text>
</comment>
<comment type="similarity">
    <text evidence="1">Belongs to the NAPRTase family.</text>
</comment>